<proteinExistence type="inferred from homology"/>
<keyword id="KW-0134">Cell wall</keyword>
<keyword id="KW-1015">Disulfide bond</keyword>
<keyword id="KW-1185">Reference proteome</keyword>
<keyword id="KW-0964">Secreted</keyword>
<keyword id="KW-0732">Signal</keyword>
<reference key="1">
    <citation type="journal article" date="2011" name="PLoS Genet.">
        <title>Genomic analysis of the necrotrophic fungal pathogens Sclerotinia sclerotiorum and Botrytis cinerea.</title>
        <authorList>
            <person name="Amselem J."/>
            <person name="Cuomo C.A."/>
            <person name="van Kan J.A.L."/>
            <person name="Viaud M."/>
            <person name="Benito E.P."/>
            <person name="Couloux A."/>
            <person name="Coutinho P.M."/>
            <person name="de Vries R.P."/>
            <person name="Dyer P.S."/>
            <person name="Fillinger S."/>
            <person name="Fournier E."/>
            <person name="Gout L."/>
            <person name="Hahn M."/>
            <person name="Kohn L."/>
            <person name="Lapalu N."/>
            <person name="Plummer K.M."/>
            <person name="Pradier J.-M."/>
            <person name="Quevillon E."/>
            <person name="Sharon A."/>
            <person name="Simon A."/>
            <person name="ten Have A."/>
            <person name="Tudzynski B."/>
            <person name="Tudzynski P."/>
            <person name="Wincker P."/>
            <person name="Andrew M."/>
            <person name="Anthouard V."/>
            <person name="Beever R.E."/>
            <person name="Beffa R."/>
            <person name="Benoit I."/>
            <person name="Bouzid O."/>
            <person name="Brault B."/>
            <person name="Chen Z."/>
            <person name="Choquer M."/>
            <person name="Collemare J."/>
            <person name="Cotton P."/>
            <person name="Danchin E.G."/>
            <person name="Da Silva C."/>
            <person name="Gautier A."/>
            <person name="Giraud C."/>
            <person name="Giraud T."/>
            <person name="Gonzalez C."/>
            <person name="Grossetete S."/>
            <person name="Gueldener U."/>
            <person name="Henrissat B."/>
            <person name="Howlett B.J."/>
            <person name="Kodira C."/>
            <person name="Kretschmer M."/>
            <person name="Lappartient A."/>
            <person name="Leroch M."/>
            <person name="Levis C."/>
            <person name="Mauceli E."/>
            <person name="Neuveglise C."/>
            <person name="Oeser B."/>
            <person name="Pearson M."/>
            <person name="Poulain J."/>
            <person name="Poussereau N."/>
            <person name="Quesneville H."/>
            <person name="Rascle C."/>
            <person name="Schumacher J."/>
            <person name="Segurens B."/>
            <person name="Sexton A."/>
            <person name="Silva E."/>
            <person name="Sirven C."/>
            <person name="Soanes D.M."/>
            <person name="Talbot N.J."/>
            <person name="Templeton M."/>
            <person name="Yandava C."/>
            <person name="Yarden O."/>
            <person name="Zeng Q."/>
            <person name="Rollins J.A."/>
            <person name="Lebrun M.-H."/>
            <person name="Dickman M."/>
        </authorList>
    </citation>
    <scope>NUCLEOTIDE SEQUENCE [LARGE SCALE GENOMIC DNA]</scope>
    <source>
        <strain>B05.10</strain>
    </source>
</reference>
<reference key="2">
    <citation type="journal article" date="2012" name="Eukaryot. Cell">
        <title>Genome update of Botrytis cinerea strains B05.10 and T4.</title>
        <authorList>
            <person name="Staats M."/>
            <person name="van Kan J.A.L."/>
        </authorList>
    </citation>
    <scope>NUCLEOTIDE SEQUENCE [LARGE SCALE GENOMIC DNA]</scope>
    <source>
        <strain>B05.10</strain>
    </source>
</reference>
<reference key="3">
    <citation type="journal article" date="2017" name="Mol. Plant Pathol.">
        <title>A gapless genome sequence of the fungus Botrytis cinerea.</title>
        <authorList>
            <person name="van Kan J.A.L."/>
            <person name="Stassen J.H.M."/>
            <person name="Mosbach A."/>
            <person name="van der Lee T.A.J."/>
            <person name="Faino L."/>
            <person name="Farmer A.D."/>
            <person name="Papasotiriou D.G."/>
            <person name="Zhou S."/>
            <person name="Seidl M.F."/>
            <person name="Cottam E."/>
            <person name="Edel D."/>
            <person name="Hahn M."/>
            <person name="Schwartz D.C."/>
            <person name="Dietrich R.A."/>
            <person name="Widdison S."/>
            <person name="Scalliet G."/>
        </authorList>
    </citation>
    <scope>NUCLEOTIDE SEQUENCE [LARGE SCALE GENOMIC DNA]</scope>
    <source>
        <strain>B05.10</strain>
    </source>
</reference>
<reference key="4">
    <citation type="journal article" date="2011" name="BMC Microbiol.">
        <title>Lack of evidence for a role of hydrophobins in conferring surface hydrophobicity to conidia and hyphae of Botrytis cinerea.</title>
        <authorList>
            <person name="Mosbach A."/>
            <person name="Leroch M."/>
            <person name="Mendgen K.W."/>
            <person name="Hahn M."/>
        </authorList>
    </citation>
    <scope>FUNCTION</scope>
    <scope>DISRUPTION PHENOTYPE</scope>
</reference>
<evidence type="ECO:0000250" key="1">
    <source>
        <dbReference type="UniProtKB" id="P52754"/>
    </source>
</evidence>
<evidence type="ECO:0000255" key="2"/>
<evidence type="ECO:0000269" key="3">
    <source>
    </source>
</evidence>
<evidence type="ECO:0000303" key="4">
    <source>
    </source>
</evidence>
<evidence type="ECO:0000305" key="5"/>
<evidence type="ECO:0000305" key="6">
    <source>
    </source>
</evidence>
<evidence type="ECO:0000312" key="7">
    <source>
        <dbReference type="EMBL" id="ATZ47525.1"/>
    </source>
</evidence>
<dbReference type="EMBL" id="CP009806">
    <property type="protein sequence ID" value="ATZ47525.1"/>
    <property type="molecule type" value="Genomic_DNA"/>
</dbReference>
<dbReference type="RefSeq" id="XP_024547321.1">
    <property type="nucleotide sequence ID" value="XM_024691550.1"/>
</dbReference>
<dbReference type="EnsemblFungi" id="Bcin02g07970.2">
    <property type="protein sequence ID" value="Bcin02p07970.2"/>
    <property type="gene ID" value="Bcin02g07970"/>
</dbReference>
<dbReference type="GeneID" id="5426770"/>
<dbReference type="VEuPathDB" id="FungiDB:Bcin02g07970"/>
<dbReference type="OrthoDB" id="3513749at2759"/>
<dbReference type="Proteomes" id="UP000001798">
    <property type="component" value="Chromosome bcin02"/>
</dbReference>
<name>BHP1_BOTFB</name>
<comment type="function">
    <text evidence="3 6">Aerial growth, conidiation, and dispersal of filamentous fungi in the environment rely upon a capability of their secreting small amphipathic proteins called hydrophobins (HPBs) with low sequence identity. Class I can self-assemble into an outermost layer of rodlet bundles on aerial cell surfaces, conferring cellular hydrophobicity that supports fungal growth, development and dispersal; whereas Class II form highly ordered films at water-air interfaces through intermolecular interactions but contribute nothing to the rodlet structure (Probable). In Botryotinia fuckeliana, hydrophobins are not involved in conferring surface hydrophobicity to conidia and aerial hyphae and their function in sclerotia and fruiting bodies remains to be investigated (PubMed:21232149).</text>
</comment>
<comment type="subcellular location">
    <subcellularLocation>
        <location evidence="6">Secreted</location>
    </subcellularLocation>
    <subcellularLocation>
        <location evidence="6">Secreted</location>
        <location evidence="6">Cell wall</location>
    </subcellularLocation>
</comment>
<comment type="disruption phenotype">
    <text evidence="3">Does not seem to affect germination and growth, formation of sclerotia, ability to penetrate and infect host tissue, nor spore and mycelium surface properties.</text>
</comment>
<comment type="similarity">
    <text evidence="5">Belongs to the fungal hydrophobin family.</text>
</comment>
<protein>
    <recommendedName>
        <fullName evidence="4">Class I hydrophobin 1</fullName>
    </recommendedName>
</protein>
<gene>
    <name type="primary">Bhp1</name>
    <name evidence="7" type="ORF">BCIN_02g07970</name>
</gene>
<sequence length="124" mass="12228">MRFSIATVVLSLAAMVVAIPTTESTLFARGGGQTCAQGQTLSCCQSVTSGGDGILGNLLGLNCAEIPIPIVGIVLGGKCNSAPVCCNVNGGSTSPDCDDNSNNGGTQGGINVLTNSCVAIPIVL</sequence>
<feature type="signal peptide" evidence="2">
    <location>
        <begin position="1"/>
        <end position="18"/>
    </location>
</feature>
<feature type="chain" id="PRO_5016913503" description="Class I hydrophobin 1">
    <location>
        <begin position="19"/>
        <end position="124"/>
    </location>
</feature>
<feature type="disulfide bond" evidence="1">
    <location>
        <begin position="35"/>
        <end position="85"/>
    </location>
</feature>
<feature type="disulfide bond" evidence="1">
    <location>
        <begin position="43"/>
        <end position="79"/>
    </location>
</feature>
<feature type="disulfide bond" evidence="1">
    <location>
        <begin position="44"/>
        <end position="63"/>
    </location>
</feature>
<feature type="disulfide bond" evidence="1">
    <location>
        <begin position="86"/>
        <end position="97"/>
    </location>
</feature>
<organism>
    <name type="scientific">Botryotinia fuckeliana (strain B05.10)</name>
    <name type="common">Noble rot fungus</name>
    <name type="synonym">Botrytis cinerea</name>
    <dbReference type="NCBI Taxonomy" id="332648"/>
    <lineage>
        <taxon>Eukaryota</taxon>
        <taxon>Fungi</taxon>
        <taxon>Dikarya</taxon>
        <taxon>Ascomycota</taxon>
        <taxon>Pezizomycotina</taxon>
        <taxon>Leotiomycetes</taxon>
        <taxon>Helotiales</taxon>
        <taxon>Sclerotiniaceae</taxon>
        <taxon>Botrytis</taxon>
    </lineage>
</organism>
<accession>A0A384JA57</accession>